<reference key="1">
    <citation type="journal article" date="1998" name="Science">
        <title>C1 transfer enzymes and coenzymes linking methylotrophic bacteria and methanogenic Archaea.</title>
        <authorList>
            <person name="Chistoserdova L.V."/>
            <person name="Vorholt J.A."/>
            <person name="Thauer R.K."/>
            <person name="Lidstrom M.E."/>
        </authorList>
    </citation>
    <scope>NUCLEOTIDE SEQUENCE [GENOMIC DNA]</scope>
</reference>
<reference key="2">
    <citation type="journal article" date="2009" name="PLoS ONE">
        <title>Methylobacterium genome sequences: a reference blueprint to investigate microbial metabolism of C1 compounds from natural and industrial sources.</title>
        <authorList>
            <person name="Vuilleumier S."/>
            <person name="Chistoserdova L."/>
            <person name="Lee M.-C."/>
            <person name="Bringel F."/>
            <person name="Lajus A."/>
            <person name="Zhou Y."/>
            <person name="Gourion B."/>
            <person name="Barbe V."/>
            <person name="Chang J."/>
            <person name="Cruveiller S."/>
            <person name="Dossat C."/>
            <person name="Gillett W."/>
            <person name="Gruffaz C."/>
            <person name="Haugen E."/>
            <person name="Hourcade E."/>
            <person name="Levy R."/>
            <person name="Mangenot S."/>
            <person name="Muller E."/>
            <person name="Nadalig T."/>
            <person name="Pagni M."/>
            <person name="Penny C."/>
            <person name="Peyraud R."/>
            <person name="Robinson D.G."/>
            <person name="Roche D."/>
            <person name="Rouy Z."/>
            <person name="Saenampechek C."/>
            <person name="Salvignol G."/>
            <person name="Vallenet D."/>
            <person name="Wu Z."/>
            <person name="Marx C.J."/>
            <person name="Vorholt J.A."/>
            <person name="Olson M.V."/>
            <person name="Kaul R."/>
            <person name="Weissenbach J."/>
            <person name="Medigue C."/>
            <person name="Lidstrom M.E."/>
        </authorList>
    </citation>
    <scope>NUCLEOTIDE SEQUENCE [LARGE SCALE GENOMIC DNA]</scope>
    <source>
        <strain>ATCC 14718 / DSM 1338 / JCM 2805 / NCIMB 9133 / AM1</strain>
    </source>
</reference>
<reference key="3">
    <citation type="journal article" date="2000" name="Eur. J. Biochem.">
        <title>Characterization of a second methylene tetrahydromethanopterin dehydrogenase from Methylobacterium extorquens AM1.</title>
        <authorList>
            <person name="Hagemeier C.H."/>
            <person name="Chistoserdova L.V."/>
            <person name="Lidstrom M.E."/>
            <person name="Thauer R.K."/>
            <person name="Vorholt J.A."/>
        </authorList>
    </citation>
    <scope>CHARACTERIZATION</scope>
    <scope>PROTEIN SEQUENCE OF 1-16</scope>
</reference>
<proteinExistence type="evidence at protein level"/>
<gene>
    <name type="primary">mtdB</name>
    <name type="ordered locus">MexAM1_META1p1761</name>
</gene>
<dbReference type="EC" id="1.5.1.-"/>
<dbReference type="EMBL" id="AF032114">
    <property type="protein sequence ID" value="AAC27020.1"/>
    <property type="molecule type" value="Genomic_DNA"/>
</dbReference>
<dbReference type="EMBL" id="CP001510">
    <property type="protein sequence ID" value="ACS39604.1"/>
    <property type="molecule type" value="Genomic_DNA"/>
</dbReference>
<dbReference type="RefSeq" id="WP_003597578.1">
    <property type="nucleotide sequence ID" value="NC_012808.1"/>
</dbReference>
<dbReference type="SMR" id="O85012"/>
<dbReference type="STRING" id="272630.MexAM1_META1p1761"/>
<dbReference type="GeneID" id="72989486"/>
<dbReference type="KEGG" id="mea:Mex_1p1761"/>
<dbReference type="eggNOG" id="COG0702">
    <property type="taxonomic scope" value="Bacteria"/>
</dbReference>
<dbReference type="HOGENOM" id="CLU_059363_0_0_5"/>
<dbReference type="OrthoDB" id="7929761at2"/>
<dbReference type="BioCyc" id="MetaCyc:MONOMER-4042"/>
<dbReference type="UniPathway" id="UPA00562">
    <property type="reaction ID" value="UER00702"/>
</dbReference>
<dbReference type="Proteomes" id="UP000009081">
    <property type="component" value="Chromosome"/>
</dbReference>
<dbReference type="GO" id="GO:0005737">
    <property type="term" value="C:cytoplasm"/>
    <property type="evidence" value="ECO:0007669"/>
    <property type="project" value="UniProtKB-SubCell"/>
</dbReference>
<dbReference type="GO" id="GO:0016491">
    <property type="term" value="F:oxidoreductase activity"/>
    <property type="evidence" value="ECO:0007669"/>
    <property type="project" value="UniProtKB-KW"/>
</dbReference>
<dbReference type="GO" id="GO:0046294">
    <property type="term" value="P:formaldehyde catabolic process"/>
    <property type="evidence" value="ECO:0007669"/>
    <property type="project" value="UniProtKB-UniPathway"/>
</dbReference>
<dbReference type="GO" id="GO:0006730">
    <property type="term" value="P:one-carbon metabolic process"/>
    <property type="evidence" value="ECO:0007669"/>
    <property type="project" value="UniProtKB-KW"/>
</dbReference>
<dbReference type="CDD" id="cd01078">
    <property type="entry name" value="NAD_bind_H4MPT_DH"/>
    <property type="match status" value="1"/>
</dbReference>
<dbReference type="Gene3D" id="3.40.50.10280">
    <property type="entry name" value="Methylene-tetrahydromethanopterin dehydrogenase, N-terminal domain"/>
    <property type="match status" value="1"/>
</dbReference>
<dbReference type="Gene3D" id="3.40.50.720">
    <property type="entry name" value="NAD(P)-binding Rossmann-like Domain"/>
    <property type="match status" value="1"/>
</dbReference>
<dbReference type="InterPro" id="IPR046346">
    <property type="entry name" value="Aminoacid_DH-like_N_sf"/>
</dbReference>
<dbReference type="InterPro" id="IPR015259">
    <property type="entry name" value="Methyl-teptahyd_DH_N"/>
</dbReference>
<dbReference type="InterPro" id="IPR037089">
    <property type="entry name" value="Methyl-teptahyd_DH_N_sf"/>
</dbReference>
<dbReference type="InterPro" id="IPR036291">
    <property type="entry name" value="NAD(P)-bd_dom_sf"/>
</dbReference>
<dbReference type="InterPro" id="IPR035015">
    <property type="entry name" value="NAD-bd_H4MPT_DH"/>
</dbReference>
<dbReference type="Pfam" id="PF09176">
    <property type="entry name" value="Mpt_N"/>
    <property type="match status" value="1"/>
</dbReference>
<dbReference type="SUPFAM" id="SSF53223">
    <property type="entry name" value="Aminoacid dehydrogenase-like, N-terminal domain"/>
    <property type="match status" value="1"/>
</dbReference>
<dbReference type="SUPFAM" id="SSF51735">
    <property type="entry name" value="NAD(P)-binding Rossmann-fold domains"/>
    <property type="match status" value="1"/>
</dbReference>
<comment type="function">
    <text>Catalyzes the dehydrogenation of methylene-H(4)MPT.</text>
</comment>
<comment type="catalytic activity">
    <reaction>
        <text>5,10-methylenetetrahydromethanopterin + NAD(+) = 5,10-methenyl-5,6,7,8-tetrahydromethanopterin + NADH</text>
        <dbReference type="Rhea" id="RHEA:53384"/>
        <dbReference type="ChEBI" id="CHEBI:57540"/>
        <dbReference type="ChEBI" id="CHEBI:57818"/>
        <dbReference type="ChEBI" id="CHEBI:57945"/>
        <dbReference type="ChEBI" id="CHEBI:58337"/>
    </reaction>
</comment>
<comment type="catalytic activity">
    <reaction>
        <text>5,10-methylenetetrahydromethanopterin + NADP(+) = 5,10-methenyl-5,6,7,8-tetrahydromethanopterin + NADPH</text>
        <dbReference type="Rhea" id="RHEA:24682"/>
        <dbReference type="ChEBI" id="CHEBI:57783"/>
        <dbReference type="ChEBI" id="CHEBI:57818"/>
        <dbReference type="ChEBI" id="CHEBI:58337"/>
        <dbReference type="ChEBI" id="CHEBI:58349"/>
    </reaction>
</comment>
<comment type="biophysicochemical properties">
    <phDependence>
        <text>Optimum pH is 6.0.</text>
    </phDependence>
    <temperatureDependence>
        <text>Optimum temperature is 35-40 degrees Celsius.</text>
    </temperatureDependence>
</comment>
<comment type="pathway">
    <text>One-carbon metabolism; formaldehyde degradation; formate from formaldehyde (H(4)MPT route): step 2/5.</text>
</comment>
<comment type="subunit">
    <text evidence="2">Homohexamer.</text>
</comment>
<comment type="subcellular location">
    <subcellularLocation>
        <location evidence="1">Cytoplasm</location>
    </subcellularLocation>
</comment>
<comment type="similarity">
    <text evidence="2">To M.extorquens MtdA.</text>
</comment>
<evidence type="ECO:0000250" key="1"/>
<evidence type="ECO:0000305" key="2"/>
<name>MTDB_METEA</name>
<feature type="chain" id="PRO_0000096616" description="NAD(P)-dependent methylenetetrahydromethanopterin dehydrogenase">
    <location>
        <begin position="1"/>
        <end position="297"/>
    </location>
</feature>
<accession>O85012</accession>
<accession>C5B140</accession>
<organism>
    <name type="scientific">Methylorubrum extorquens (strain ATCC 14718 / DSM 1338 / JCM 2805 / NCIMB 9133 / AM1)</name>
    <name type="common">Methylobacterium extorquens</name>
    <dbReference type="NCBI Taxonomy" id="272630"/>
    <lineage>
        <taxon>Bacteria</taxon>
        <taxon>Pseudomonadati</taxon>
        <taxon>Pseudomonadota</taxon>
        <taxon>Alphaproteobacteria</taxon>
        <taxon>Hyphomicrobiales</taxon>
        <taxon>Methylobacteriaceae</taxon>
        <taxon>Methylorubrum</taxon>
    </lineage>
</organism>
<protein>
    <recommendedName>
        <fullName>NAD(P)-dependent methylenetetrahydromethanopterin dehydrogenase</fullName>
        <ecNumber>1.5.1.-</ecNumber>
    </recommendedName>
</protein>
<keyword id="KW-0963">Cytoplasm</keyword>
<keyword id="KW-0903">Direct protein sequencing</keyword>
<keyword id="KW-0520">NAD</keyword>
<keyword id="KW-0521">NADP</keyword>
<keyword id="KW-0554">One-carbon metabolism</keyword>
<keyword id="KW-0560">Oxidoreductase</keyword>
<keyword id="KW-1185">Reference proteome</keyword>
<sequence length="297" mass="31151">MARSILHMLTPLKHMSPFDVNMAIDAGFETLIPYTGVDLTDVVSLTQDSIFSRAPQDGVRTGIFIGGKNAELALDMVDRAKKAFVPPFVNHVFADPAGSFTTGAAMVAEVNRALKARFSTDLKGKRIVIFGGAGVVAYVAAVIGALEGAQTVLVGHDGEERVSKIAFTMKWRFGIDVGAVDGTLPEARRAAITDADVILSAGPAGVSILTAEDLESAPKLLVASDVNAVPPAGIAGIDVNAVDVPLPTGKGVGIGALAVGNVKYQTQCRMFRKMLEAQEPLCLDFRDAYKLAVEIAG</sequence>